<gene>
    <name type="ordered locus">PputW619_5026</name>
</gene>
<proteinExistence type="inferred from homology"/>
<accession>B1JEZ1</accession>
<comment type="similarity">
    <text evidence="1">Belongs to the UPF0149 family.</text>
</comment>
<feature type="chain" id="PRO_1000120477" description="UPF0149 protein PputW619_5026">
    <location>
        <begin position="1"/>
        <end position="184"/>
    </location>
</feature>
<name>Y5026_PSEPW</name>
<sequence length="184" mass="19374">MPNTQSPYTAFAALLSSNGHPVSPAELHGLLIGRSCAGAGFEADAWLADAAGVLENEPEDNVRAALIGLQEMVKAELTGEDIAIVLLLPSDETPLTERATALGQWCQGFIAGFGLNAGGKDLSTDAKEVLQDLVAISQVQEALEESEDGESDYMEVMEYLRVAPLLLYTELAAPAAPAPKPSLH</sequence>
<reference key="1">
    <citation type="submission" date="2008-02" db="EMBL/GenBank/DDBJ databases">
        <title>Complete sequence of Pseudomonas putida W619.</title>
        <authorList>
            <person name="Copeland A."/>
            <person name="Lucas S."/>
            <person name="Lapidus A."/>
            <person name="Barry K."/>
            <person name="Detter J.C."/>
            <person name="Glavina del Rio T."/>
            <person name="Dalin E."/>
            <person name="Tice H."/>
            <person name="Pitluck S."/>
            <person name="Chain P."/>
            <person name="Malfatti S."/>
            <person name="Shin M."/>
            <person name="Vergez L."/>
            <person name="Schmutz J."/>
            <person name="Larimer F."/>
            <person name="Land M."/>
            <person name="Hauser L."/>
            <person name="Kyrpides N."/>
            <person name="Kim E."/>
            <person name="Taghavi S."/>
            <person name="Vangronsveld D."/>
            <person name="van der Lelie D."/>
            <person name="Richardson P."/>
        </authorList>
    </citation>
    <scope>NUCLEOTIDE SEQUENCE [LARGE SCALE GENOMIC DNA]</scope>
    <source>
        <strain>W619</strain>
    </source>
</reference>
<organism>
    <name type="scientific">Pseudomonas putida (strain W619)</name>
    <dbReference type="NCBI Taxonomy" id="390235"/>
    <lineage>
        <taxon>Bacteria</taxon>
        <taxon>Pseudomonadati</taxon>
        <taxon>Pseudomonadota</taxon>
        <taxon>Gammaproteobacteria</taxon>
        <taxon>Pseudomonadales</taxon>
        <taxon>Pseudomonadaceae</taxon>
        <taxon>Pseudomonas</taxon>
    </lineage>
</organism>
<dbReference type="EMBL" id="CP000949">
    <property type="protein sequence ID" value="ACA75502.1"/>
    <property type="molecule type" value="Genomic_DNA"/>
</dbReference>
<dbReference type="SMR" id="B1JEZ1"/>
<dbReference type="STRING" id="390235.PputW619_5026"/>
<dbReference type="KEGG" id="ppw:PputW619_5026"/>
<dbReference type="eggNOG" id="COG3079">
    <property type="taxonomic scope" value="Bacteria"/>
</dbReference>
<dbReference type="HOGENOM" id="CLU_085336_0_1_6"/>
<dbReference type="OrthoDB" id="9783391at2"/>
<dbReference type="GO" id="GO:0005829">
    <property type="term" value="C:cytosol"/>
    <property type="evidence" value="ECO:0007669"/>
    <property type="project" value="TreeGrafter"/>
</dbReference>
<dbReference type="Gene3D" id="1.20.120.740">
    <property type="entry name" value="YgfB uncharacterised protein family UPF0149, PF03695"/>
    <property type="match status" value="1"/>
</dbReference>
<dbReference type="HAMAP" id="MF_00346">
    <property type="entry name" value="UPF0149"/>
    <property type="match status" value="1"/>
</dbReference>
<dbReference type="InterPro" id="IPR011978">
    <property type="entry name" value="YgfB-like"/>
</dbReference>
<dbReference type="InterPro" id="IPR036255">
    <property type="entry name" value="YgfB-like_sf"/>
</dbReference>
<dbReference type="NCBIfam" id="NF002562">
    <property type="entry name" value="PRK02166.1"/>
    <property type="match status" value="1"/>
</dbReference>
<dbReference type="PANTHER" id="PTHR37528">
    <property type="entry name" value="UPF0149 PROTEIN YGFB"/>
    <property type="match status" value="1"/>
</dbReference>
<dbReference type="PANTHER" id="PTHR37528:SF1">
    <property type="entry name" value="UPF0149 PROTEIN YGFB"/>
    <property type="match status" value="1"/>
</dbReference>
<dbReference type="Pfam" id="PF03695">
    <property type="entry name" value="UPF0149"/>
    <property type="match status" value="1"/>
</dbReference>
<dbReference type="SUPFAM" id="SSF101327">
    <property type="entry name" value="YgfB-like"/>
    <property type="match status" value="1"/>
</dbReference>
<protein>
    <recommendedName>
        <fullName evidence="1">UPF0149 protein PputW619_5026</fullName>
    </recommendedName>
</protein>
<evidence type="ECO:0000255" key="1">
    <source>
        <dbReference type="HAMAP-Rule" id="MF_00346"/>
    </source>
</evidence>